<organism>
    <name type="scientific">Salmonella typhimurium (strain LT2 / SGSC1412 / ATCC 700720)</name>
    <dbReference type="NCBI Taxonomy" id="99287"/>
    <lineage>
        <taxon>Bacteria</taxon>
        <taxon>Pseudomonadati</taxon>
        <taxon>Pseudomonadota</taxon>
        <taxon>Gammaproteobacteria</taxon>
        <taxon>Enterobacterales</taxon>
        <taxon>Enterobacteriaceae</taxon>
        <taxon>Salmonella</taxon>
    </lineage>
</organism>
<comment type="function">
    <text evidence="1">Catalyzes the formation of 4-diphosphocytidyl-2-C-methyl-D-erythritol from CTP and 2-C-methyl-D-erythritol 4-phosphate (MEP).</text>
</comment>
<comment type="catalytic activity">
    <reaction evidence="1">
        <text>2-C-methyl-D-erythritol 4-phosphate + CTP + H(+) = 4-CDP-2-C-methyl-D-erythritol + diphosphate</text>
        <dbReference type="Rhea" id="RHEA:13429"/>
        <dbReference type="ChEBI" id="CHEBI:15378"/>
        <dbReference type="ChEBI" id="CHEBI:33019"/>
        <dbReference type="ChEBI" id="CHEBI:37563"/>
        <dbReference type="ChEBI" id="CHEBI:57823"/>
        <dbReference type="ChEBI" id="CHEBI:58262"/>
        <dbReference type="EC" id="2.7.7.60"/>
    </reaction>
</comment>
<comment type="pathway">
    <text evidence="1">Isoprenoid biosynthesis; isopentenyl diphosphate biosynthesis via DXP pathway; isopentenyl diphosphate from 1-deoxy-D-xylulose 5-phosphate: step 2/6.</text>
</comment>
<comment type="subunit">
    <text evidence="1">Homodimer.</text>
</comment>
<comment type="similarity">
    <text evidence="1">Belongs to the IspD/TarI cytidylyltransferase family. IspD subfamily.</text>
</comment>
<accession>Q8ZMF6</accession>
<gene>
    <name evidence="1" type="primary">ispD</name>
    <name type="ordered locus">STM2930</name>
</gene>
<protein>
    <recommendedName>
        <fullName evidence="1">2-C-methyl-D-erythritol 4-phosphate cytidylyltransferase</fullName>
        <ecNumber evidence="1">2.7.7.60</ecNumber>
    </recommendedName>
    <alternativeName>
        <fullName evidence="1">4-diphosphocytidyl-2C-methyl-D-erythritol synthase</fullName>
    </alternativeName>
    <alternativeName>
        <fullName evidence="1">MEP cytidylyltransferase</fullName>
        <shortName evidence="1">MCT</shortName>
    </alternativeName>
</protein>
<feature type="chain" id="PRO_0000075610" description="2-C-methyl-D-erythritol 4-phosphate cytidylyltransferase">
    <location>
        <begin position="1"/>
        <end position="236"/>
    </location>
</feature>
<feature type="site" description="Transition state stabilizer" evidence="1">
    <location>
        <position position="20"/>
    </location>
</feature>
<feature type="site" description="Transition state stabilizer" evidence="1">
    <location>
        <position position="27"/>
    </location>
</feature>
<feature type="site" description="Positions MEP for the nucleophilic attack" evidence="1">
    <location>
        <position position="157"/>
    </location>
</feature>
<feature type="site" description="Positions MEP for the nucleophilic attack" evidence="1">
    <location>
        <position position="213"/>
    </location>
</feature>
<name>ISPD_SALTY</name>
<sequence length="236" mass="25755">MAATLLDVCAVVPAAGFGRRMQTECPKQYLSIGNKTILEHSVHALLAHPRVTRVVIAISPGDHRFAQLPLANHPQITVVDGGNERADSVLAGLQAVAKAQWVLVHDAARPCLHQDDLARLLAISENSRVGGILASPVRDTMKRGEPGKNAIAHTVERADLWHALTPQFFPRELLYDCLTRALNEGATITDEASALEYCGFHPALVEGRADNIKVTRPEDLALAEFYLTRTIHQEKA</sequence>
<proteinExistence type="inferred from homology"/>
<reference key="1">
    <citation type="journal article" date="2001" name="Nature">
        <title>Complete genome sequence of Salmonella enterica serovar Typhimurium LT2.</title>
        <authorList>
            <person name="McClelland M."/>
            <person name="Sanderson K.E."/>
            <person name="Spieth J."/>
            <person name="Clifton S.W."/>
            <person name="Latreille P."/>
            <person name="Courtney L."/>
            <person name="Porwollik S."/>
            <person name="Ali J."/>
            <person name="Dante M."/>
            <person name="Du F."/>
            <person name="Hou S."/>
            <person name="Layman D."/>
            <person name="Leonard S."/>
            <person name="Nguyen C."/>
            <person name="Scott K."/>
            <person name="Holmes A."/>
            <person name="Grewal N."/>
            <person name="Mulvaney E."/>
            <person name="Ryan E."/>
            <person name="Sun H."/>
            <person name="Florea L."/>
            <person name="Miller W."/>
            <person name="Stoneking T."/>
            <person name="Nhan M."/>
            <person name="Waterston R."/>
            <person name="Wilson R.K."/>
        </authorList>
    </citation>
    <scope>NUCLEOTIDE SEQUENCE [LARGE SCALE GENOMIC DNA]</scope>
    <source>
        <strain>LT2 / SGSC1412 / ATCC 700720</strain>
    </source>
</reference>
<keyword id="KW-0414">Isoprene biosynthesis</keyword>
<keyword id="KW-0548">Nucleotidyltransferase</keyword>
<keyword id="KW-1185">Reference proteome</keyword>
<keyword id="KW-0808">Transferase</keyword>
<dbReference type="EC" id="2.7.7.60" evidence="1"/>
<dbReference type="EMBL" id="AE006468">
    <property type="protein sequence ID" value="AAL21810.1"/>
    <property type="molecule type" value="Genomic_DNA"/>
</dbReference>
<dbReference type="RefSeq" id="NP_461851.1">
    <property type="nucleotide sequence ID" value="NC_003197.2"/>
</dbReference>
<dbReference type="RefSeq" id="WP_000741650.1">
    <property type="nucleotide sequence ID" value="NC_003197.2"/>
</dbReference>
<dbReference type="SMR" id="Q8ZMF6"/>
<dbReference type="STRING" id="99287.STM2930"/>
<dbReference type="PaxDb" id="99287-STM2930"/>
<dbReference type="GeneID" id="1254453"/>
<dbReference type="KEGG" id="stm:STM2930"/>
<dbReference type="PATRIC" id="fig|99287.12.peg.3084"/>
<dbReference type="HOGENOM" id="CLU_061281_3_1_6"/>
<dbReference type="OMA" id="TPMLIHA"/>
<dbReference type="PhylomeDB" id="Q8ZMF6"/>
<dbReference type="BioCyc" id="SENT99287:STM2930-MONOMER"/>
<dbReference type="UniPathway" id="UPA00056">
    <property type="reaction ID" value="UER00093"/>
</dbReference>
<dbReference type="Proteomes" id="UP000001014">
    <property type="component" value="Chromosome"/>
</dbReference>
<dbReference type="GO" id="GO:0050518">
    <property type="term" value="F:2-C-methyl-D-erythritol 4-phosphate cytidylyltransferase activity"/>
    <property type="evidence" value="ECO:0000318"/>
    <property type="project" value="GO_Central"/>
</dbReference>
<dbReference type="GO" id="GO:0019288">
    <property type="term" value="P:isopentenyl diphosphate biosynthetic process, methylerythritol 4-phosphate pathway"/>
    <property type="evidence" value="ECO:0007669"/>
    <property type="project" value="UniProtKB-UniRule"/>
</dbReference>
<dbReference type="CDD" id="cd02516">
    <property type="entry name" value="CDP-ME_synthetase"/>
    <property type="match status" value="1"/>
</dbReference>
<dbReference type="FunFam" id="3.90.550.10:FF:000003">
    <property type="entry name" value="2-C-methyl-D-erythritol 4-phosphate cytidylyltransferase"/>
    <property type="match status" value="1"/>
</dbReference>
<dbReference type="Gene3D" id="3.90.550.10">
    <property type="entry name" value="Spore Coat Polysaccharide Biosynthesis Protein SpsA, Chain A"/>
    <property type="match status" value="1"/>
</dbReference>
<dbReference type="HAMAP" id="MF_00108">
    <property type="entry name" value="IspD"/>
    <property type="match status" value="1"/>
</dbReference>
<dbReference type="InterPro" id="IPR001228">
    <property type="entry name" value="IspD"/>
</dbReference>
<dbReference type="InterPro" id="IPR034683">
    <property type="entry name" value="IspD/TarI"/>
</dbReference>
<dbReference type="InterPro" id="IPR050088">
    <property type="entry name" value="IspD/TarI_cytidylyltransf_bact"/>
</dbReference>
<dbReference type="InterPro" id="IPR018294">
    <property type="entry name" value="ISPD_synthase_CS"/>
</dbReference>
<dbReference type="InterPro" id="IPR029044">
    <property type="entry name" value="Nucleotide-diphossugar_trans"/>
</dbReference>
<dbReference type="NCBIfam" id="TIGR00453">
    <property type="entry name" value="ispD"/>
    <property type="match status" value="1"/>
</dbReference>
<dbReference type="PANTHER" id="PTHR32125">
    <property type="entry name" value="2-C-METHYL-D-ERYTHRITOL 4-PHOSPHATE CYTIDYLYLTRANSFERASE, CHLOROPLASTIC"/>
    <property type="match status" value="1"/>
</dbReference>
<dbReference type="PANTHER" id="PTHR32125:SF4">
    <property type="entry name" value="2-C-METHYL-D-ERYTHRITOL 4-PHOSPHATE CYTIDYLYLTRANSFERASE, CHLOROPLASTIC"/>
    <property type="match status" value="1"/>
</dbReference>
<dbReference type="Pfam" id="PF01128">
    <property type="entry name" value="IspD"/>
    <property type="match status" value="1"/>
</dbReference>
<dbReference type="SUPFAM" id="SSF53448">
    <property type="entry name" value="Nucleotide-diphospho-sugar transferases"/>
    <property type="match status" value="1"/>
</dbReference>
<dbReference type="PROSITE" id="PS01295">
    <property type="entry name" value="ISPD"/>
    <property type="match status" value="1"/>
</dbReference>
<evidence type="ECO:0000255" key="1">
    <source>
        <dbReference type="HAMAP-Rule" id="MF_00108"/>
    </source>
</evidence>